<gene>
    <name type="primary">ND4</name>
    <name type="synonym">NAD4</name>
</gene>
<sequence length="497" mass="57768">MAFLLYYTLFISFMLWLAALLIISFSVYGSPEKVKLIKKTSLFFSFFQFILIIFFWILSDNISVLAEFDIYNFQFYKQWLFLYNFHYVIGMDNISLLFLLLTFFLTPICILISWNSIKYRYNSFIICLIFITFILFNIFCVLDLVFFYIFFESILIPMFILIGVWGSRQRKIHAVYQLFFYTLLGSLLMLLGILVIYSHIQTTDIRVLYNTNFSFYRQLILWASFFFAFCVKVPLFPFHIWLPEAHVEAPTVGSVILAGVLLKLGTYGLLRFVIPIFCDATYFFLPLVYTLCLLGIIYTCCSTIRQVDLKKVIAYASVSHMSFVILGLFTSNIQGIGGSVFLMLSHGIVSSGLFFCIGCVYDRYKTRILRYYSGLVSTMPIFSLCLFILILSNISFPGTSSFIGEFLILLGLFENNHFAALIATFSIILTAVYSIWLYNRIIFNRLVVNYYLRFSDFSKKEFVVGFIFCFITILFGLKGSYIISLIEAPLYVYLSFK</sequence>
<protein>
    <recommendedName>
        <fullName>NADH-ubiquinone oxidoreductase chain 4</fullName>
        <ecNumber>7.1.1.2</ecNumber>
    </recommendedName>
    <alternativeName>
        <fullName>NADH dehydrogenase subunit 4</fullName>
    </alternativeName>
</protein>
<keyword id="KW-0249">Electron transport</keyword>
<keyword id="KW-0472">Membrane</keyword>
<keyword id="KW-0496">Mitochondrion</keyword>
<keyword id="KW-0520">NAD</keyword>
<keyword id="KW-0679">Respiratory chain</keyword>
<keyword id="KW-1278">Translocase</keyword>
<keyword id="KW-0812">Transmembrane</keyword>
<keyword id="KW-1133">Transmembrane helix</keyword>
<keyword id="KW-0813">Transport</keyword>
<keyword id="KW-0830">Ubiquinone</keyword>
<reference key="1">
    <citation type="journal article" date="1995" name="J. Mol. Biol.">
        <title>The mitochondrial DNA of the amoeboid protozoon, Acanthamoeba castellanii: complete sequence, gene content and genome organization.</title>
        <authorList>
            <person name="Burger G."/>
            <person name="Plante I."/>
            <person name="Lonergan K.M."/>
            <person name="Gray M.W."/>
        </authorList>
    </citation>
    <scope>NUCLEOTIDE SEQUENCE [GENOMIC DNA]</scope>
    <source>
        <strain>ATCC 30010 / Neff</strain>
    </source>
</reference>
<organism>
    <name type="scientific">Acanthamoeba castellanii</name>
    <name type="common">Amoeba</name>
    <dbReference type="NCBI Taxonomy" id="5755"/>
    <lineage>
        <taxon>Eukaryota</taxon>
        <taxon>Amoebozoa</taxon>
        <taxon>Discosea</taxon>
        <taxon>Longamoebia</taxon>
        <taxon>Centramoebida</taxon>
        <taxon>Acanthamoebidae</taxon>
        <taxon>Acanthamoeba</taxon>
    </lineage>
</organism>
<comment type="function">
    <text evidence="1">Core subunit of the mitochondrial membrane respiratory chain NADH dehydrogenase (Complex I) that is believed to belong to the minimal assembly required for catalysis. Complex I functions in the transfer of electrons from NADH to the respiratory chain. The immediate electron acceptor for the enzyme is believed to be ubiquinone (By similarity).</text>
</comment>
<comment type="catalytic activity">
    <reaction>
        <text>a ubiquinone + NADH + 5 H(+)(in) = a ubiquinol + NAD(+) + 4 H(+)(out)</text>
        <dbReference type="Rhea" id="RHEA:29091"/>
        <dbReference type="Rhea" id="RHEA-COMP:9565"/>
        <dbReference type="Rhea" id="RHEA-COMP:9566"/>
        <dbReference type="ChEBI" id="CHEBI:15378"/>
        <dbReference type="ChEBI" id="CHEBI:16389"/>
        <dbReference type="ChEBI" id="CHEBI:17976"/>
        <dbReference type="ChEBI" id="CHEBI:57540"/>
        <dbReference type="ChEBI" id="CHEBI:57945"/>
        <dbReference type="EC" id="7.1.1.2"/>
    </reaction>
</comment>
<comment type="subcellular location">
    <subcellularLocation>
        <location evidence="1">Mitochondrion membrane</location>
        <topology evidence="1">Multi-pass membrane protein</topology>
    </subcellularLocation>
</comment>
<comment type="similarity">
    <text evidence="3">Belongs to the complex I subunit 4 family.</text>
</comment>
<accession>Q37375</accession>
<evidence type="ECO:0000250" key="1"/>
<evidence type="ECO:0000255" key="2"/>
<evidence type="ECO:0000305" key="3"/>
<dbReference type="EC" id="7.1.1.2"/>
<dbReference type="EMBL" id="U12386">
    <property type="protein sequence ID" value="AAD11826.1"/>
    <property type="molecule type" value="Genomic_DNA"/>
</dbReference>
<dbReference type="PIR" id="S53834">
    <property type="entry name" value="S53834"/>
</dbReference>
<dbReference type="RefSeq" id="NP_042533.1">
    <property type="nucleotide sequence ID" value="NC_001637.1"/>
</dbReference>
<dbReference type="SMR" id="Q37375"/>
<dbReference type="GeneID" id="1734028"/>
<dbReference type="GO" id="GO:0031966">
    <property type="term" value="C:mitochondrial membrane"/>
    <property type="evidence" value="ECO:0007669"/>
    <property type="project" value="UniProtKB-SubCell"/>
</dbReference>
<dbReference type="GO" id="GO:0008137">
    <property type="term" value="F:NADH dehydrogenase (ubiquinone) activity"/>
    <property type="evidence" value="ECO:0007669"/>
    <property type="project" value="UniProtKB-EC"/>
</dbReference>
<dbReference type="GO" id="GO:0048039">
    <property type="term" value="F:ubiquinone binding"/>
    <property type="evidence" value="ECO:0007669"/>
    <property type="project" value="TreeGrafter"/>
</dbReference>
<dbReference type="GO" id="GO:0042773">
    <property type="term" value="P:ATP synthesis coupled electron transport"/>
    <property type="evidence" value="ECO:0007669"/>
    <property type="project" value="InterPro"/>
</dbReference>
<dbReference type="GO" id="GO:0015990">
    <property type="term" value="P:electron transport coupled proton transport"/>
    <property type="evidence" value="ECO:0007669"/>
    <property type="project" value="TreeGrafter"/>
</dbReference>
<dbReference type="InterPro" id="IPR010227">
    <property type="entry name" value="NADH_Q_OxRdtase_chainM/4"/>
</dbReference>
<dbReference type="InterPro" id="IPR003918">
    <property type="entry name" value="NADH_UbQ_OxRdtase"/>
</dbReference>
<dbReference type="InterPro" id="IPR001750">
    <property type="entry name" value="ND/Mrp_TM"/>
</dbReference>
<dbReference type="NCBIfam" id="TIGR01972">
    <property type="entry name" value="NDH_I_M"/>
    <property type="match status" value="1"/>
</dbReference>
<dbReference type="PANTHER" id="PTHR43507">
    <property type="entry name" value="NADH-UBIQUINONE OXIDOREDUCTASE CHAIN 4"/>
    <property type="match status" value="1"/>
</dbReference>
<dbReference type="PANTHER" id="PTHR43507:SF1">
    <property type="entry name" value="NADH-UBIQUINONE OXIDOREDUCTASE CHAIN 4"/>
    <property type="match status" value="1"/>
</dbReference>
<dbReference type="Pfam" id="PF00361">
    <property type="entry name" value="Proton_antipo_M"/>
    <property type="match status" value="1"/>
</dbReference>
<dbReference type="PRINTS" id="PR01437">
    <property type="entry name" value="NUOXDRDTASE4"/>
</dbReference>
<proteinExistence type="inferred from homology"/>
<feature type="chain" id="PRO_0000117877" description="NADH-ubiquinone oxidoreductase chain 4">
    <location>
        <begin position="1"/>
        <end position="497"/>
    </location>
</feature>
<feature type="transmembrane region" description="Helical" evidence="2">
    <location>
        <begin position="3"/>
        <end position="23"/>
    </location>
</feature>
<feature type="transmembrane region" description="Helical" evidence="2">
    <location>
        <begin position="42"/>
        <end position="62"/>
    </location>
</feature>
<feature type="transmembrane region" description="Helical" evidence="2">
    <location>
        <begin position="94"/>
        <end position="114"/>
    </location>
</feature>
<feature type="transmembrane region" description="Helical" evidence="2">
    <location>
        <begin position="122"/>
        <end position="142"/>
    </location>
</feature>
<feature type="transmembrane region" description="Helical" evidence="2">
    <location>
        <begin position="144"/>
        <end position="164"/>
    </location>
</feature>
<feature type="transmembrane region" description="Helical" evidence="2">
    <location>
        <begin position="178"/>
        <end position="198"/>
    </location>
</feature>
<feature type="transmembrane region" description="Helical" evidence="2">
    <location>
        <begin position="220"/>
        <end position="240"/>
    </location>
</feature>
<feature type="transmembrane region" description="Helical" evidence="2">
    <location>
        <begin position="250"/>
        <end position="270"/>
    </location>
</feature>
<feature type="transmembrane region" description="Helical" evidence="2">
    <location>
        <begin position="276"/>
        <end position="296"/>
    </location>
</feature>
<feature type="transmembrane region" description="Helical" evidence="2">
    <location>
        <begin position="313"/>
        <end position="333"/>
    </location>
</feature>
<feature type="transmembrane region" description="Helical" evidence="2">
    <location>
        <begin position="340"/>
        <end position="360"/>
    </location>
</feature>
<feature type="transmembrane region" description="Helical" evidence="2">
    <location>
        <begin position="374"/>
        <end position="394"/>
    </location>
</feature>
<feature type="transmembrane region" description="Helical" evidence="2">
    <location>
        <begin position="418"/>
        <end position="438"/>
    </location>
</feature>
<feature type="transmembrane region" description="Helical" evidence="2">
    <location>
        <begin position="463"/>
        <end position="483"/>
    </location>
</feature>
<name>NU4M_ACACA</name>
<geneLocation type="mitochondrion"/>